<protein>
    <recommendedName>
        <fullName>DNA repair protein RAD51 homolog 3</fullName>
    </recommendedName>
</protein>
<reference key="1">
    <citation type="journal article" date="2005" name="Nature">
        <title>The genome of the social amoeba Dictyostelium discoideum.</title>
        <authorList>
            <person name="Eichinger L."/>
            <person name="Pachebat J.A."/>
            <person name="Gloeckner G."/>
            <person name="Rajandream M.A."/>
            <person name="Sucgang R."/>
            <person name="Berriman M."/>
            <person name="Song J."/>
            <person name="Olsen R."/>
            <person name="Szafranski K."/>
            <person name="Xu Q."/>
            <person name="Tunggal B."/>
            <person name="Kummerfeld S."/>
            <person name="Madera M."/>
            <person name="Konfortov B.A."/>
            <person name="Rivero F."/>
            <person name="Bankier A.T."/>
            <person name="Lehmann R."/>
            <person name="Hamlin N."/>
            <person name="Davies R."/>
            <person name="Gaudet P."/>
            <person name="Fey P."/>
            <person name="Pilcher K."/>
            <person name="Chen G."/>
            <person name="Saunders D."/>
            <person name="Sodergren E.J."/>
            <person name="Davis P."/>
            <person name="Kerhornou A."/>
            <person name="Nie X."/>
            <person name="Hall N."/>
            <person name="Anjard C."/>
            <person name="Hemphill L."/>
            <person name="Bason N."/>
            <person name="Farbrother P."/>
            <person name="Desany B."/>
            <person name="Just E."/>
            <person name="Morio T."/>
            <person name="Rost R."/>
            <person name="Churcher C.M."/>
            <person name="Cooper J."/>
            <person name="Haydock S."/>
            <person name="van Driessche N."/>
            <person name="Cronin A."/>
            <person name="Goodhead I."/>
            <person name="Muzny D.M."/>
            <person name="Mourier T."/>
            <person name="Pain A."/>
            <person name="Lu M."/>
            <person name="Harper D."/>
            <person name="Lindsay R."/>
            <person name="Hauser H."/>
            <person name="James K.D."/>
            <person name="Quiles M."/>
            <person name="Madan Babu M."/>
            <person name="Saito T."/>
            <person name="Buchrieser C."/>
            <person name="Wardroper A."/>
            <person name="Felder M."/>
            <person name="Thangavelu M."/>
            <person name="Johnson D."/>
            <person name="Knights A."/>
            <person name="Loulseged H."/>
            <person name="Mungall K.L."/>
            <person name="Oliver K."/>
            <person name="Price C."/>
            <person name="Quail M.A."/>
            <person name="Urushihara H."/>
            <person name="Hernandez J."/>
            <person name="Rabbinowitsch E."/>
            <person name="Steffen D."/>
            <person name="Sanders M."/>
            <person name="Ma J."/>
            <person name="Kohara Y."/>
            <person name="Sharp S."/>
            <person name="Simmonds M.N."/>
            <person name="Spiegler S."/>
            <person name="Tivey A."/>
            <person name="Sugano S."/>
            <person name="White B."/>
            <person name="Walker D."/>
            <person name="Woodward J.R."/>
            <person name="Winckler T."/>
            <person name="Tanaka Y."/>
            <person name="Shaulsky G."/>
            <person name="Schleicher M."/>
            <person name="Weinstock G.M."/>
            <person name="Rosenthal A."/>
            <person name="Cox E.C."/>
            <person name="Chisholm R.L."/>
            <person name="Gibbs R.A."/>
            <person name="Loomis W.F."/>
            <person name="Platzer M."/>
            <person name="Kay R.R."/>
            <person name="Williams J.G."/>
            <person name="Dear P.H."/>
            <person name="Noegel A.A."/>
            <person name="Barrell B.G."/>
            <person name="Kuspa A."/>
        </authorList>
    </citation>
    <scope>NUCLEOTIDE SEQUENCE [LARGE SCALE GENOMIC DNA]</scope>
    <source>
        <strain>AX4</strain>
    </source>
</reference>
<evidence type="ECO:0000250" key="1"/>
<evidence type="ECO:0000255" key="2"/>
<evidence type="ECO:0000256" key="3">
    <source>
        <dbReference type="SAM" id="MobiDB-lite"/>
    </source>
</evidence>
<evidence type="ECO:0000305" key="4"/>
<keyword id="KW-0067">ATP-binding</keyword>
<keyword id="KW-0175">Coiled coil</keyword>
<keyword id="KW-0227">DNA damage</keyword>
<keyword id="KW-0233">DNA recombination</keyword>
<keyword id="KW-0234">DNA repair</keyword>
<keyword id="KW-0238">DNA-binding</keyword>
<keyword id="KW-0547">Nucleotide-binding</keyword>
<keyword id="KW-0539">Nucleus</keyword>
<keyword id="KW-1185">Reference proteome</keyword>
<dbReference type="EMBL" id="AAFI02000066">
    <property type="protein sequence ID" value="EAL65180.1"/>
    <property type="molecule type" value="Genomic_DNA"/>
</dbReference>
<dbReference type="RefSeq" id="XP_638535.1">
    <property type="nucleotide sequence ID" value="XM_633443.1"/>
</dbReference>
<dbReference type="SMR" id="Q54PJ7"/>
<dbReference type="FunCoup" id="Q54PJ7">
    <property type="interactions" value="275"/>
</dbReference>
<dbReference type="STRING" id="44689.Q54PJ7"/>
<dbReference type="PaxDb" id="44689-DDB0232315"/>
<dbReference type="EnsemblProtists" id="EAL65180">
    <property type="protein sequence ID" value="EAL65180"/>
    <property type="gene ID" value="DDB_G0284507"/>
</dbReference>
<dbReference type="GeneID" id="8624628"/>
<dbReference type="KEGG" id="ddi:DDB_G0284507"/>
<dbReference type="dictyBase" id="DDB_G0284507"/>
<dbReference type="VEuPathDB" id="AmoebaDB:DDB_G0284507"/>
<dbReference type="eggNOG" id="KOG1434">
    <property type="taxonomic scope" value="Eukaryota"/>
</dbReference>
<dbReference type="HOGENOM" id="CLU_041732_1_1_1"/>
<dbReference type="InParanoid" id="Q54PJ7"/>
<dbReference type="OMA" id="WGHICSV"/>
<dbReference type="PhylomeDB" id="Q54PJ7"/>
<dbReference type="PRO" id="PR:Q54PJ7"/>
<dbReference type="Proteomes" id="UP000002195">
    <property type="component" value="Chromosome 4"/>
</dbReference>
<dbReference type="GO" id="GO:0005634">
    <property type="term" value="C:nucleus"/>
    <property type="evidence" value="ECO:0000250"/>
    <property type="project" value="dictyBase"/>
</dbReference>
<dbReference type="GO" id="GO:0033063">
    <property type="term" value="C:Rad51B-Rad51C-Rad51D-XRCC2 complex"/>
    <property type="evidence" value="ECO:0000318"/>
    <property type="project" value="GO_Central"/>
</dbReference>
<dbReference type="GO" id="GO:0033065">
    <property type="term" value="C:Rad51C-XRCC3 complex"/>
    <property type="evidence" value="ECO:0000318"/>
    <property type="project" value="GO_Central"/>
</dbReference>
<dbReference type="GO" id="GO:0005657">
    <property type="term" value="C:replication fork"/>
    <property type="evidence" value="ECO:0000318"/>
    <property type="project" value="GO_Central"/>
</dbReference>
<dbReference type="GO" id="GO:0005524">
    <property type="term" value="F:ATP binding"/>
    <property type="evidence" value="ECO:0007669"/>
    <property type="project" value="UniProtKB-KW"/>
</dbReference>
<dbReference type="GO" id="GO:0140664">
    <property type="term" value="F:ATP-dependent DNA damage sensor activity"/>
    <property type="evidence" value="ECO:0007669"/>
    <property type="project" value="InterPro"/>
</dbReference>
<dbReference type="GO" id="GO:0003677">
    <property type="term" value="F:DNA binding"/>
    <property type="evidence" value="ECO:0000250"/>
    <property type="project" value="dictyBase"/>
</dbReference>
<dbReference type="GO" id="GO:0000707">
    <property type="term" value="P:meiotic DNA recombinase assembly"/>
    <property type="evidence" value="ECO:0000318"/>
    <property type="project" value="GO_Central"/>
</dbReference>
<dbReference type="GO" id="GO:0007131">
    <property type="term" value="P:reciprocal meiotic recombination"/>
    <property type="evidence" value="ECO:0000318"/>
    <property type="project" value="GO_Central"/>
</dbReference>
<dbReference type="CDD" id="cd19492">
    <property type="entry name" value="Rad51C"/>
    <property type="match status" value="1"/>
</dbReference>
<dbReference type="FunFam" id="3.40.50.300:FF:001318">
    <property type="entry name" value="DNA repair protein RAD51"/>
    <property type="match status" value="1"/>
</dbReference>
<dbReference type="Gene3D" id="3.40.50.300">
    <property type="entry name" value="P-loop containing nucleotide triphosphate hydrolases"/>
    <property type="match status" value="1"/>
</dbReference>
<dbReference type="InterPro" id="IPR013632">
    <property type="entry name" value="DNA_recomb/repair_Rad51_C"/>
</dbReference>
<dbReference type="InterPro" id="IPR052093">
    <property type="entry name" value="HR_Repair_Mediator"/>
</dbReference>
<dbReference type="InterPro" id="IPR027417">
    <property type="entry name" value="P-loop_NTPase"/>
</dbReference>
<dbReference type="InterPro" id="IPR020588">
    <property type="entry name" value="RecA_ATP-bd"/>
</dbReference>
<dbReference type="PANTHER" id="PTHR46239:SF1">
    <property type="entry name" value="DNA REPAIR PROTEIN RAD51 HOMOLOG 3"/>
    <property type="match status" value="1"/>
</dbReference>
<dbReference type="PANTHER" id="PTHR46239">
    <property type="entry name" value="DNA REPAIR PROTEIN RAD51 HOMOLOG 3 RAD51C"/>
    <property type="match status" value="1"/>
</dbReference>
<dbReference type="Pfam" id="PF08423">
    <property type="entry name" value="Rad51"/>
    <property type="match status" value="1"/>
</dbReference>
<dbReference type="SUPFAM" id="SSF52540">
    <property type="entry name" value="P-loop containing nucleoside triphosphate hydrolases"/>
    <property type="match status" value="1"/>
</dbReference>
<dbReference type="PROSITE" id="PS50162">
    <property type="entry name" value="RECA_2"/>
    <property type="match status" value="1"/>
</dbReference>
<sequence length="381" mass="43955">MDEDINKDTNNNNNTTDSNNNNNNINEDEIIFNNYINNYSNYLNNNGISALDLLIQGRDGNNNIITFCSEIDQMLNGGTPLKKITEICGVPGIGKTNMAFQLLVNTSIPFDLGGVQGKAIYIDTEGSYSCQRVREMATHLVNHLECVLLKNPMTQTTYIPTVETVLNSIYYYRVYHYIEIISLIHQLPLFLEKNKDVKLIVVDSITYPFRCDFKDMGLRTRSLLSLAQNLMNIATRYNLAVVVMNQVTTKISPNQKESILVPYLGESWTHICTYRMVLFWKQKQRFCHLYKSPSFKSCFTPFDIVEYGIRDVGFNHPPPLNPEDQEQEKEKEKRKKKNNNNNNNNNNNNNNNNNNNNNNNNNNNNNNNNKNNDENEMYIEN</sequence>
<proteinExistence type="inferred from homology"/>
<accession>Q54PJ7</accession>
<gene>
    <name type="primary">rad51c</name>
    <name type="ORF">DDB_G0284507</name>
</gene>
<feature type="chain" id="PRO_0000377485" description="DNA repair protein RAD51 homolog 3">
    <location>
        <begin position="1"/>
        <end position="381"/>
    </location>
</feature>
<feature type="region of interest" description="Disordered" evidence="3">
    <location>
        <begin position="1"/>
        <end position="24"/>
    </location>
</feature>
<feature type="region of interest" description="Disordered" evidence="3">
    <location>
        <begin position="313"/>
        <end position="381"/>
    </location>
</feature>
<feature type="coiled-coil region" evidence="2">
    <location>
        <begin position="323"/>
        <end position="377"/>
    </location>
</feature>
<feature type="compositionally biased region" description="Low complexity" evidence="3">
    <location>
        <begin position="8"/>
        <end position="24"/>
    </location>
</feature>
<feature type="compositionally biased region" description="Low complexity" evidence="3">
    <location>
        <begin position="339"/>
        <end position="370"/>
    </location>
</feature>
<feature type="binding site" evidence="2">
    <location>
        <begin position="89"/>
        <end position="96"/>
    </location>
    <ligand>
        <name>ATP</name>
        <dbReference type="ChEBI" id="CHEBI:30616"/>
    </ligand>
</feature>
<name>RA51C_DICDI</name>
<organism>
    <name type="scientific">Dictyostelium discoideum</name>
    <name type="common">Social amoeba</name>
    <dbReference type="NCBI Taxonomy" id="44689"/>
    <lineage>
        <taxon>Eukaryota</taxon>
        <taxon>Amoebozoa</taxon>
        <taxon>Evosea</taxon>
        <taxon>Eumycetozoa</taxon>
        <taxon>Dictyostelia</taxon>
        <taxon>Dictyosteliales</taxon>
        <taxon>Dictyosteliaceae</taxon>
        <taxon>Dictyostelium</taxon>
    </lineage>
</organism>
<comment type="function">
    <text evidence="1">Involved in the homologous recombination repair (HRR) pathway of double-stranded DNA breaks arising during DNA replication or induced by DNA-damaging agents.</text>
</comment>
<comment type="subcellular location">
    <subcellularLocation>
        <location evidence="1">Nucleus</location>
    </subcellularLocation>
</comment>
<comment type="similarity">
    <text evidence="4">Belongs to the RecA family. RAD51 subfamily.</text>
</comment>